<reference key="1">
    <citation type="journal article" date="2003" name="Nucleic Acids Res.">
        <title>What's in the genome of a filamentous fungus? Analysis of the Neurospora genome sequence.</title>
        <authorList>
            <person name="Mannhaupt G."/>
            <person name="Montrone C."/>
            <person name="Haase D."/>
            <person name="Mewes H.-W."/>
            <person name="Aign V."/>
            <person name="Hoheisel J.D."/>
            <person name="Fartmann B."/>
            <person name="Nyakatura G."/>
            <person name="Kempken F."/>
            <person name="Maier J."/>
            <person name="Schulte U."/>
        </authorList>
    </citation>
    <scope>NUCLEOTIDE SEQUENCE [LARGE SCALE GENOMIC DNA]</scope>
    <source>
        <strain>ATCC 24698 / 74-OR23-1A / CBS 708.71 / DSM 1257 / FGSC 987</strain>
    </source>
</reference>
<reference key="2">
    <citation type="journal article" date="2003" name="Nature">
        <title>The genome sequence of the filamentous fungus Neurospora crassa.</title>
        <authorList>
            <person name="Galagan J.E."/>
            <person name="Calvo S.E."/>
            <person name="Borkovich K.A."/>
            <person name="Selker E.U."/>
            <person name="Read N.D."/>
            <person name="Jaffe D.B."/>
            <person name="FitzHugh W."/>
            <person name="Ma L.-J."/>
            <person name="Smirnov S."/>
            <person name="Purcell S."/>
            <person name="Rehman B."/>
            <person name="Elkins T."/>
            <person name="Engels R."/>
            <person name="Wang S."/>
            <person name="Nielsen C.B."/>
            <person name="Butler J."/>
            <person name="Endrizzi M."/>
            <person name="Qui D."/>
            <person name="Ianakiev P."/>
            <person name="Bell-Pedersen D."/>
            <person name="Nelson M.A."/>
            <person name="Werner-Washburne M."/>
            <person name="Selitrennikoff C.P."/>
            <person name="Kinsey J.A."/>
            <person name="Braun E.L."/>
            <person name="Zelter A."/>
            <person name="Schulte U."/>
            <person name="Kothe G.O."/>
            <person name="Jedd G."/>
            <person name="Mewes H.-W."/>
            <person name="Staben C."/>
            <person name="Marcotte E."/>
            <person name="Greenberg D."/>
            <person name="Roy A."/>
            <person name="Foley K."/>
            <person name="Naylor J."/>
            <person name="Stange-Thomann N."/>
            <person name="Barrett R."/>
            <person name="Gnerre S."/>
            <person name="Kamal M."/>
            <person name="Kamvysselis M."/>
            <person name="Mauceli E.W."/>
            <person name="Bielke C."/>
            <person name="Rudd S."/>
            <person name="Frishman D."/>
            <person name="Krystofova S."/>
            <person name="Rasmussen C."/>
            <person name="Metzenberg R.L."/>
            <person name="Perkins D.D."/>
            <person name="Kroken S."/>
            <person name="Cogoni C."/>
            <person name="Macino G."/>
            <person name="Catcheside D.E.A."/>
            <person name="Li W."/>
            <person name="Pratt R.J."/>
            <person name="Osmani S.A."/>
            <person name="DeSouza C.P.C."/>
            <person name="Glass N.L."/>
            <person name="Orbach M.J."/>
            <person name="Berglund J.A."/>
            <person name="Voelker R."/>
            <person name="Yarden O."/>
            <person name="Plamann M."/>
            <person name="Seiler S."/>
            <person name="Dunlap J.C."/>
            <person name="Radford A."/>
            <person name="Aramayo R."/>
            <person name="Natvig D.O."/>
            <person name="Alex L.A."/>
            <person name="Mannhaupt G."/>
            <person name="Ebbole D.J."/>
            <person name="Freitag M."/>
            <person name="Paulsen I."/>
            <person name="Sachs M.S."/>
            <person name="Lander E.S."/>
            <person name="Nusbaum C."/>
            <person name="Birren B.W."/>
        </authorList>
    </citation>
    <scope>NUCLEOTIDE SEQUENCE [LARGE SCALE GENOMIC DNA]</scope>
    <source>
        <strain>ATCC 24698 / 74-OR23-1A / CBS 708.71 / DSM 1257 / FGSC 987</strain>
    </source>
</reference>
<feature type="chain" id="PRO_0000303061" description="Mediator of RNA polymerase II transcription subunit 6">
    <location>
        <begin position="1"/>
        <end position="360"/>
    </location>
</feature>
<feature type="region of interest" description="Disordered" evidence="2">
    <location>
        <begin position="186"/>
        <end position="238"/>
    </location>
</feature>
<feature type="region of interest" description="Disordered" evidence="2">
    <location>
        <begin position="316"/>
        <end position="360"/>
    </location>
</feature>
<feature type="compositionally biased region" description="Low complexity" evidence="2">
    <location>
        <begin position="190"/>
        <end position="205"/>
    </location>
</feature>
<feature type="compositionally biased region" description="Low complexity" evidence="2">
    <location>
        <begin position="316"/>
        <end position="325"/>
    </location>
</feature>
<comment type="function">
    <text evidence="1">Component of the Mediator complex, a coactivator involved in the regulated transcription of nearly all RNA polymerase II-dependent genes. Mediator functions as a bridge to convey information from gene-specific regulatory proteins to the basal RNA polymerase II transcription machinery. Mediator is recruited to promoters by direct interactions with regulatory proteins and serves as a scaffold for the assembly of a functional preinitiation complex with RNA polymerase II and the general transcription factors (By similarity).</text>
</comment>
<comment type="subunit">
    <text evidence="1">Component of the Mediator complex.</text>
</comment>
<comment type="subcellular location">
    <subcellularLocation>
        <location evidence="1">Nucleus</location>
    </subcellularLocation>
</comment>
<comment type="similarity">
    <text evidence="3">Belongs to the Mediator complex subunit 6 family.</text>
</comment>
<proteinExistence type="inferred from homology"/>
<name>MED6_NEUCR</name>
<accession>Q9HED8</accession>
<dbReference type="EMBL" id="AL451018">
    <property type="protein sequence ID" value="CAC18248.1"/>
    <property type="molecule type" value="Genomic_DNA"/>
</dbReference>
<dbReference type="EMBL" id="CM002240">
    <property type="protein sequence ID" value="EAA31962.1"/>
    <property type="molecule type" value="Genomic_DNA"/>
</dbReference>
<dbReference type="RefSeq" id="XP_961198.1">
    <property type="nucleotide sequence ID" value="XM_956105.2"/>
</dbReference>
<dbReference type="SMR" id="Q9HED8"/>
<dbReference type="FunCoup" id="Q9HED8">
    <property type="interactions" value="765"/>
</dbReference>
<dbReference type="STRING" id="367110.Q9HED8"/>
<dbReference type="PaxDb" id="5141-EFNCRP00000003347"/>
<dbReference type="EnsemblFungi" id="EAA31962">
    <property type="protein sequence ID" value="EAA31962"/>
    <property type="gene ID" value="NCU03809"/>
</dbReference>
<dbReference type="GeneID" id="3877358"/>
<dbReference type="KEGG" id="ncr:NCU03809"/>
<dbReference type="VEuPathDB" id="FungiDB:NCU03809"/>
<dbReference type="HOGENOM" id="CLU_060172_0_0_1"/>
<dbReference type="InParanoid" id="Q9HED8"/>
<dbReference type="OMA" id="ASHGHTY"/>
<dbReference type="OrthoDB" id="344220at2759"/>
<dbReference type="Proteomes" id="UP000001805">
    <property type="component" value="Chromosome 2, Linkage Group V"/>
</dbReference>
<dbReference type="GO" id="GO:0070847">
    <property type="term" value="C:core mediator complex"/>
    <property type="evidence" value="ECO:0000318"/>
    <property type="project" value="GO_Central"/>
</dbReference>
<dbReference type="GO" id="GO:0016592">
    <property type="term" value="C:mediator complex"/>
    <property type="evidence" value="ECO:0000318"/>
    <property type="project" value="GO_Central"/>
</dbReference>
<dbReference type="GO" id="GO:0003713">
    <property type="term" value="F:transcription coactivator activity"/>
    <property type="evidence" value="ECO:0000318"/>
    <property type="project" value="GO_Central"/>
</dbReference>
<dbReference type="GO" id="GO:0006357">
    <property type="term" value="P:regulation of transcription by RNA polymerase II"/>
    <property type="evidence" value="ECO:0000318"/>
    <property type="project" value="GO_Central"/>
</dbReference>
<dbReference type="FunFam" id="3.10.450.580:FF:000003">
    <property type="entry name" value="Mediator of RNA polymerase II transcription subunit 6"/>
    <property type="match status" value="1"/>
</dbReference>
<dbReference type="Gene3D" id="3.10.450.580">
    <property type="entry name" value="Mediator complex, subunit Med6"/>
    <property type="match status" value="1"/>
</dbReference>
<dbReference type="InterPro" id="IPR007018">
    <property type="entry name" value="Mediator_Med6"/>
</dbReference>
<dbReference type="InterPro" id="IPR038566">
    <property type="entry name" value="Mediator_Med6_sf"/>
</dbReference>
<dbReference type="PANTHER" id="PTHR13104">
    <property type="entry name" value="MED-6-RELATED"/>
    <property type="match status" value="1"/>
</dbReference>
<dbReference type="Pfam" id="PF04934">
    <property type="entry name" value="Med6"/>
    <property type="match status" value="1"/>
</dbReference>
<gene>
    <name type="primary">med-6</name>
    <name type="ORF">99H12.120</name>
    <name type="ORF">NCU03809</name>
</gene>
<protein>
    <recommendedName>
        <fullName>Mediator of RNA polymerase II transcription subunit 6</fullName>
    </recommendedName>
    <alternativeName>
        <fullName>Mediator complex subunit 6</fullName>
    </alternativeName>
</protein>
<organism>
    <name type="scientific">Neurospora crassa (strain ATCC 24698 / 74-OR23-1A / CBS 708.71 / DSM 1257 / FGSC 987)</name>
    <dbReference type="NCBI Taxonomy" id="367110"/>
    <lineage>
        <taxon>Eukaryota</taxon>
        <taxon>Fungi</taxon>
        <taxon>Dikarya</taxon>
        <taxon>Ascomycota</taxon>
        <taxon>Pezizomycotina</taxon>
        <taxon>Sordariomycetes</taxon>
        <taxon>Sordariomycetidae</taxon>
        <taxon>Sordariales</taxon>
        <taxon>Sordariaceae</taxon>
        <taxon>Neurospora</taxon>
    </lineage>
</organism>
<sequence length="360" mass="37736">MAFDPAANAGPPLDEIQWHTPPQFEAGIHSNSILYYFAQSPFYDKTSNNEVVFQQGLNNQAMSQYLATRELFESRLKEMSGLEFIVAQEPAETGPGMGTGVWVINKQTRRKRPPTNPARPEDGPPDEIIVHSVYFVVGENIYMAPTLADVLSSRIGAIATAITKTIPLVDEVSDWAPAVGRRYITPAQPSAGAGAASGTTNYTASRTATPLPDGLPSTATTNKPGAKAGGGTTTNDPLLDSLLMEEALLTHERYGTEYMDENPITGKPGDFHLTSTGRKTQTKSALTLKEAAAALPALNTKGLGAAGSNPLAKGAAAAAAANANAVTGKETKSPKTPGGGGPPKPKRRKSKNVITTPGAA</sequence>
<keyword id="KW-0010">Activator</keyword>
<keyword id="KW-0539">Nucleus</keyword>
<keyword id="KW-1185">Reference proteome</keyword>
<keyword id="KW-0804">Transcription</keyword>
<keyword id="KW-0805">Transcription regulation</keyword>
<evidence type="ECO:0000250" key="1"/>
<evidence type="ECO:0000256" key="2">
    <source>
        <dbReference type="SAM" id="MobiDB-lite"/>
    </source>
</evidence>
<evidence type="ECO:0000305" key="3"/>